<evidence type="ECO:0000255" key="1">
    <source>
        <dbReference type="HAMAP-Rule" id="MF_00658"/>
    </source>
</evidence>
<protein>
    <recommendedName>
        <fullName evidence="1">Ribosomal RNA large subunit methyltransferase H</fullName>
        <ecNumber evidence="1">2.1.1.177</ecNumber>
    </recommendedName>
    <alternativeName>
        <fullName evidence="1">23S rRNA (pseudouridine1915-N3)-methyltransferase</fullName>
    </alternativeName>
    <alternativeName>
        <fullName evidence="1">23S rRNA m3Psi1915 methyltransferase</fullName>
    </alternativeName>
    <alternativeName>
        <fullName evidence="1">rRNA (pseudouridine-N3-)-methyltransferase RlmH</fullName>
    </alternativeName>
</protein>
<gene>
    <name evidence="1" type="primary">rlmH</name>
    <name type="ordered locus">Glov_3630</name>
</gene>
<sequence length="153" mass="17549">MKLRIIWLGKTRDPWIKQGVTEYSGRIERYLPLAIDELKDEKDATLEEGRRREGERLLKQLSPNAVLVALDERGQQLDSVKFAEFIGKHRDSGTTELVFAIGGSYGFSDEVRSRAGKVLALSAMTFTHQMVRPFLLEQIYRACTILNNEPYHH</sequence>
<reference key="1">
    <citation type="submission" date="2008-05" db="EMBL/GenBank/DDBJ databases">
        <title>Complete sequence of chromosome of Geobacter lovleyi SZ.</title>
        <authorList>
            <consortium name="US DOE Joint Genome Institute"/>
            <person name="Lucas S."/>
            <person name="Copeland A."/>
            <person name="Lapidus A."/>
            <person name="Glavina del Rio T."/>
            <person name="Dalin E."/>
            <person name="Tice H."/>
            <person name="Bruce D."/>
            <person name="Goodwin L."/>
            <person name="Pitluck S."/>
            <person name="Chertkov O."/>
            <person name="Meincke L."/>
            <person name="Brettin T."/>
            <person name="Detter J.C."/>
            <person name="Han C."/>
            <person name="Tapia R."/>
            <person name="Kuske C.R."/>
            <person name="Schmutz J."/>
            <person name="Larimer F."/>
            <person name="Land M."/>
            <person name="Hauser L."/>
            <person name="Kyrpides N."/>
            <person name="Mikhailova N."/>
            <person name="Sung Y."/>
            <person name="Fletcher K.E."/>
            <person name="Ritalahti K.M."/>
            <person name="Loeffler F.E."/>
            <person name="Richardson P."/>
        </authorList>
    </citation>
    <scope>NUCLEOTIDE SEQUENCE [LARGE SCALE GENOMIC DNA]</scope>
    <source>
        <strain>ATCC BAA-1151 / DSM 17278 / SZ</strain>
    </source>
</reference>
<keyword id="KW-0963">Cytoplasm</keyword>
<keyword id="KW-0489">Methyltransferase</keyword>
<keyword id="KW-1185">Reference proteome</keyword>
<keyword id="KW-0698">rRNA processing</keyword>
<keyword id="KW-0949">S-adenosyl-L-methionine</keyword>
<keyword id="KW-0808">Transferase</keyword>
<name>RLMH_TRIL1</name>
<dbReference type="EC" id="2.1.1.177" evidence="1"/>
<dbReference type="EMBL" id="CP001089">
    <property type="protein sequence ID" value="ACD97330.1"/>
    <property type="molecule type" value="Genomic_DNA"/>
</dbReference>
<dbReference type="RefSeq" id="WP_012471648.1">
    <property type="nucleotide sequence ID" value="NC_010814.1"/>
</dbReference>
<dbReference type="SMR" id="B3E3Q8"/>
<dbReference type="STRING" id="398767.Glov_3630"/>
<dbReference type="KEGG" id="glo:Glov_3630"/>
<dbReference type="eggNOG" id="COG1576">
    <property type="taxonomic scope" value="Bacteria"/>
</dbReference>
<dbReference type="HOGENOM" id="CLU_100552_0_0_7"/>
<dbReference type="OrthoDB" id="9806643at2"/>
<dbReference type="Proteomes" id="UP000002420">
    <property type="component" value="Chromosome"/>
</dbReference>
<dbReference type="GO" id="GO:0005737">
    <property type="term" value="C:cytoplasm"/>
    <property type="evidence" value="ECO:0007669"/>
    <property type="project" value="UniProtKB-SubCell"/>
</dbReference>
<dbReference type="GO" id="GO:0070038">
    <property type="term" value="F:rRNA (pseudouridine-N3-)-methyltransferase activity"/>
    <property type="evidence" value="ECO:0007669"/>
    <property type="project" value="UniProtKB-UniRule"/>
</dbReference>
<dbReference type="CDD" id="cd18081">
    <property type="entry name" value="RlmH-like"/>
    <property type="match status" value="1"/>
</dbReference>
<dbReference type="Gene3D" id="3.40.1280.10">
    <property type="match status" value="1"/>
</dbReference>
<dbReference type="HAMAP" id="MF_00658">
    <property type="entry name" value="23SrRNA_methyltr_H"/>
    <property type="match status" value="1"/>
</dbReference>
<dbReference type="InterPro" id="IPR029028">
    <property type="entry name" value="Alpha/beta_knot_MTases"/>
</dbReference>
<dbReference type="InterPro" id="IPR003742">
    <property type="entry name" value="RlmH-like"/>
</dbReference>
<dbReference type="InterPro" id="IPR029026">
    <property type="entry name" value="tRNA_m1G_MTases_N"/>
</dbReference>
<dbReference type="PANTHER" id="PTHR33603">
    <property type="entry name" value="METHYLTRANSFERASE"/>
    <property type="match status" value="1"/>
</dbReference>
<dbReference type="PANTHER" id="PTHR33603:SF1">
    <property type="entry name" value="RIBOSOMAL RNA LARGE SUBUNIT METHYLTRANSFERASE H"/>
    <property type="match status" value="1"/>
</dbReference>
<dbReference type="Pfam" id="PF02590">
    <property type="entry name" value="SPOUT_MTase"/>
    <property type="match status" value="1"/>
</dbReference>
<dbReference type="PIRSF" id="PIRSF004505">
    <property type="entry name" value="MT_bac"/>
    <property type="match status" value="1"/>
</dbReference>
<dbReference type="SUPFAM" id="SSF75217">
    <property type="entry name" value="alpha/beta knot"/>
    <property type="match status" value="1"/>
</dbReference>
<proteinExistence type="inferred from homology"/>
<accession>B3E3Q8</accession>
<comment type="function">
    <text evidence="1">Specifically methylates the pseudouridine at position 1915 (m3Psi1915) in 23S rRNA.</text>
</comment>
<comment type="catalytic activity">
    <reaction evidence="1">
        <text>pseudouridine(1915) in 23S rRNA + S-adenosyl-L-methionine = N(3)-methylpseudouridine(1915) in 23S rRNA + S-adenosyl-L-homocysteine + H(+)</text>
        <dbReference type="Rhea" id="RHEA:42752"/>
        <dbReference type="Rhea" id="RHEA-COMP:10221"/>
        <dbReference type="Rhea" id="RHEA-COMP:10222"/>
        <dbReference type="ChEBI" id="CHEBI:15378"/>
        <dbReference type="ChEBI" id="CHEBI:57856"/>
        <dbReference type="ChEBI" id="CHEBI:59789"/>
        <dbReference type="ChEBI" id="CHEBI:65314"/>
        <dbReference type="ChEBI" id="CHEBI:74486"/>
        <dbReference type="EC" id="2.1.1.177"/>
    </reaction>
</comment>
<comment type="subunit">
    <text evidence="1">Homodimer.</text>
</comment>
<comment type="subcellular location">
    <subcellularLocation>
        <location evidence="1">Cytoplasm</location>
    </subcellularLocation>
</comment>
<comment type="similarity">
    <text evidence="1">Belongs to the RNA methyltransferase RlmH family.</text>
</comment>
<organism>
    <name type="scientific">Trichlorobacter lovleyi (strain ATCC BAA-1151 / DSM 17278 / SZ)</name>
    <name type="common">Geobacter lovleyi</name>
    <dbReference type="NCBI Taxonomy" id="398767"/>
    <lineage>
        <taxon>Bacteria</taxon>
        <taxon>Pseudomonadati</taxon>
        <taxon>Thermodesulfobacteriota</taxon>
        <taxon>Desulfuromonadia</taxon>
        <taxon>Geobacterales</taxon>
        <taxon>Geobacteraceae</taxon>
        <taxon>Trichlorobacter</taxon>
    </lineage>
</organism>
<feature type="chain" id="PRO_0000366601" description="Ribosomal RNA large subunit methyltransferase H">
    <location>
        <begin position="1"/>
        <end position="153"/>
    </location>
</feature>
<feature type="binding site" evidence="1">
    <location>
        <position position="70"/>
    </location>
    <ligand>
        <name>S-adenosyl-L-methionine</name>
        <dbReference type="ChEBI" id="CHEBI:59789"/>
    </ligand>
</feature>
<feature type="binding site" evidence="1">
    <location>
        <position position="102"/>
    </location>
    <ligand>
        <name>S-adenosyl-L-methionine</name>
        <dbReference type="ChEBI" id="CHEBI:59789"/>
    </ligand>
</feature>
<feature type="binding site" evidence="1">
    <location>
        <begin position="121"/>
        <end position="126"/>
    </location>
    <ligand>
        <name>S-adenosyl-L-methionine</name>
        <dbReference type="ChEBI" id="CHEBI:59789"/>
    </ligand>
</feature>